<organism>
    <name type="scientific">Escherichia coli</name>
    <dbReference type="NCBI Taxonomy" id="562"/>
    <lineage>
        <taxon>Bacteria</taxon>
        <taxon>Pseudomonadati</taxon>
        <taxon>Pseudomonadota</taxon>
        <taxon>Gammaproteobacteria</taxon>
        <taxon>Enterobacterales</taxon>
        <taxon>Enterobacteriaceae</taxon>
        <taxon>Escherichia</taxon>
    </lineage>
</organism>
<reference evidence="8 11" key="1">
    <citation type="journal article" date="1996" name="J. Med. Microbiol.">
        <title>Analysis of the fim cluster of an avian O2 strain of Escherichia coli: serogroup-specific sites within fimA and nucleotide sequence of fimI.</title>
        <authorList>
            <person name="Marc D."/>
            <person name="Dho-Moulin M."/>
        </authorList>
    </citation>
    <scope>NUCLEOTIDE SEQUENCE [GENOMIC DNA]</scope>
    <scope>PROTEIN SEQUENCE OF 24-33</scope>
    <scope>VARIABILITY</scope>
    <source>
        <strain evidence="11">O2:K1:H+ / MT78</strain>
    </source>
</reference>
<reference evidence="8 9" key="2">
    <citation type="journal article" date="2001" name="Mol. Microbiol.">
        <title>Type 1 pili-mediated adherence of Escherichia coli strain LF82 isolated from Crohn's disease is involved in bacterial invasion of intestinal epithelial cells.</title>
        <authorList>
            <person name="Boudeau J."/>
            <person name="Barnich N."/>
            <person name="Darfeuille-Michaud A."/>
        </authorList>
    </citation>
    <scope>NUCLEOTIDE SEQUENCE [GENOMIC DNA]</scope>
    <scope>FUNCTION</scope>
    <source>
        <strain evidence="9">LF82 / AIEC</strain>
    </source>
</reference>
<reference evidence="8 10" key="3">
    <citation type="journal article" date="2003" name="Vet. Res.">
        <title>Sequence analysis demonstrates the conservation of fimH and variability of fimA throughout avian pathogenic Escherichia coli (APEC).</title>
        <authorList>
            <person name="Vandemaele F."/>
            <person name="Vandekerchove D."/>
            <person name="Vereecken M."/>
            <person name="Derijcke J."/>
            <person name="Dho-Moulin M."/>
            <person name="Goddeeris B.M."/>
        </authorList>
    </citation>
    <scope>NUCLEOTIDE SEQUENCE [GENOMIC DNA]</scope>
    <scope>VARIABILITY</scope>
    <source>
        <strain evidence="10">21 / APEC</strain>
    </source>
</reference>
<reference key="4">
    <citation type="journal article" date="2010" name="Mol. Cell">
        <title>A soluble form of the pilus protein FimA targets the VDAC-hexokinase complex at mitochondria to suppress host cell apoptosis.</title>
        <authorList>
            <person name="Sukumaran S.K."/>
            <person name="Fu N.Y."/>
            <person name="Tin C.B."/>
            <person name="Wan K.F."/>
            <person name="Lee S.S."/>
            <person name="Yu V.C."/>
        </authorList>
    </citation>
    <scope>NUCLEOTIDE SEQUENCE [GENOMIC DNA]</scope>
    <scope>PROTEIN SEQUENCE OF 24-31; 39-63 AND 69-180</scope>
    <source>
        <strain>K1 / RS218 / O18:K1:H7</strain>
    </source>
</reference>
<comment type="function">
    <text evidence="2 4">Fimbriae (also called pili), polar filaments radiating from the surface of the bacterium to a length of 0.5-1.5 micrometers and numbering 100-300 per cell, enable bacteria to colonize the epithelium of specific host organs.</text>
</comment>
<comment type="subcellular location">
    <subcellularLocation>
        <location evidence="2">Fimbrium</location>
    </subcellularLocation>
</comment>
<comment type="miscellaneous">
    <text evidence="5 7">The fimA gene is highly variable between different strains of E.coli.</text>
</comment>
<comment type="similarity">
    <text evidence="3">Belongs to the fimbrial protein family.</text>
</comment>
<proteinExistence type="evidence at protein level"/>
<sequence length="184" mass="18553">MKIKTLAIVVLSALSLSSTAALADTTPTTVNGGTVHFKGEVVNAACAVDAGSVDQTVQLGQVRTATLKQAGATSSAVGFNIQLNDCDTTVATKAAVAFLGTAIDSTHPKVLALQSSAAGSATNVGVQILDRTGNELTLDGATFSAETTLNNGTNTIPFQARYFATGAATPGAANADATFKVQYQ</sequence>
<dbReference type="EMBL" id="Z37500">
    <property type="protein sequence ID" value="CAA85727.1"/>
    <property type="molecule type" value="Genomic_DNA"/>
</dbReference>
<dbReference type="EMBL" id="AF286465">
    <property type="protein sequence ID" value="AAG24825.1"/>
    <property type="molecule type" value="Genomic_DNA"/>
</dbReference>
<dbReference type="EMBL" id="AF490877">
    <property type="protein sequence ID" value="AAO84635.1"/>
    <property type="molecule type" value="Genomic_DNA"/>
</dbReference>
<dbReference type="EMBL" id="FN643152">
    <property type="protein sequence ID" value="CBI71394.1"/>
    <property type="molecule type" value="Genomic_DNA"/>
</dbReference>
<dbReference type="PIR" id="S53065">
    <property type="entry name" value="S53065"/>
</dbReference>
<dbReference type="RefSeq" id="WP_000695580.1">
    <property type="nucleotide sequence ID" value="NZ_VRXC01000056.1"/>
</dbReference>
<dbReference type="SMR" id="Q47223"/>
<dbReference type="STRING" id="585034.ECIAI1_4530"/>
<dbReference type="PATRIC" id="fig|562.10854.peg.1302"/>
<dbReference type="OMA" id="GACTIAP"/>
<dbReference type="PHI-base" id="PHI:7205"/>
<dbReference type="GO" id="GO:0009289">
    <property type="term" value="C:pilus"/>
    <property type="evidence" value="ECO:0007669"/>
    <property type="project" value="UniProtKB-SubCell"/>
</dbReference>
<dbReference type="GO" id="GO:0043709">
    <property type="term" value="P:cell adhesion involved in single-species biofilm formation"/>
    <property type="evidence" value="ECO:0007669"/>
    <property type="project" value="TreeGrafter"/>
</dbReference>
<dbReference type="FunFam" id="2.60.40.1090:FF:000001">
    <property type="entry name" value="Type-1 fimbrial major subunit"/>
    <property type="match status" value="1"/>
</dbReference>
<dbReference type="Gene3D" id="2.60.40.1090">
    <property type="entry name" value="Fimbrial-type adhesion domain"/>
    <property type="match status" value="1"/>
</dbReference>
<dbReference type="InterPro" id="IPR000259">
    <property type="entry name" value="Adhesion_dom_fimbrial"/>
</dbReference>
<dbReference type="InterPro" id="IPR036937">
    <property type="entry name" value="Adhesion_dom_fimbrial_sf"/>
</dbReference>
<dbReference type="InterPro" id="IPR008966">
    <property type="entry name" value="Adhesion_dom_sf"/>
</dbReference>
<dbReference type="InterPro" id="IPR050263">
    <property type="entry name" value="Bact_Fimbrial_Adh_Pro"/>
</dbReference>
<dbReference type="NCBIfam" id="NF011741">
    <property type="entry name" value="PRK15194.1"/>
    <property type="match status" value="1"/>
</dbReference>
<dbReference type="PANTHER" id="PTHR33420">
    <property type="entry name" value="FIMBRIAL SUBUNIT ELFA-RELATED"/>
    <property type="match status" value="1"/>
</dbReference>
<dbReference type="PANTHER" id="PTHR33420:SF12">
    <property type="entry name" value="FIMBRIN-LIKE PROTEIN FIMI-RELATED"/>
    <property type="match status" value="1"/>
</dbReference>
<dbReference type="Pfam" id="PF00419">
    <property type="entry name" value="Fimbrial"/>
    <property type="match status" value="1"/>
</dbReference>
<dbReference type="SUPFAM" id="SSF49401">
    <property type="entry name" value="Bacterial adhesins"/>
    <property type="match status" value="1"/>
</dbReference>
<keyword id="KW-0903">Direct protein sequencing</keyword>
<keyword id="KW-1015">Disulfide bond</keyword>
<keyword id="KW-0281">Fimbrium</keyword>
<keyword id="KW-0732">Signal</keyword>
<gene>
    <name evidence="9" type="primary">fimA</name>
</gene>
<feature type="signal peptide" evidence="6 7">
    <location>
        <begin position="1"/>
        <end position="23"/>
    </location>
</feature>
<feature type="chain" id="PRO_0000391700" description="Type-1 fimbrial protein, A chain" evidence="6">
    <location>
        <begin position="24"/>
        <end position="184"/>
    </location>
</feature>
<feature type="disulfide bond" evidence="1">
    <location>
        <begin position="46"/>
        <end position="86"/>
    </location>
</feature>
<evidence type="ECO:0000250" key="1">
    <source>
        <dbReference type="UniProtKB" id="P04127"/>
    </source>
</evidence>
<evidence type="ECO:0000250" key="2">
    <source>
        <dbReference type="UniProtKB" id="P04128"/>
    </source>
</evidence>
<evidence type="ECO:0000255" key="3"/>
<evidence type="ECO:0000269" key="4">
    <source>
    </source>
</evidence>
<evidence type="ECO:0000269" key="5">
    <source>
    </source>
</evidence>
<evidence type="ECO:0000269" key="6">
    <source>
    </source>
</evidence>
<evidence type="ECO:0000269" key="7">
    <source>
    </source>
</evidence>
<evidence type="ECO:0000305" key="8"/>
<evidence type="ECO:0000312" key="9">
    <source>
        <dbReference type="EMBL" id="AAG24825.1"/>
    </source>
</evidence>
<evidence type="ECO:0000312" key="10">
    <source>
        <dbReference type="EMBL" id="AAO84635.1"/>
    </source>
</evidence>
<evidence type="ECO:0000312" key="11">
    <source>
        <dbReference type="EMBL" id="CAA85727.1"/>
    </source>
</evidence>
<accession>Q47223</accession>
<accession>P94764</accession>
<protein>
    <recommendedName>
        <fullName evidence="2">Type-1 fimbrial protein, A chain</fullName>
    </recommendedName>
    <alternativeName>
        <fullName evidence="2">Type-1A pilin</fullName>
    </alternativeName>
</protein>
<name>FIMA1_ECOLX</name>